<accession>Q8NWR4</accession>
<dbReference type="EC" id="2.4.1.227" evidence="1"/>
<dbReference type="EMBL" id="BA000033">
    <property type="protein sequence ID" value="BAB95172.1"/>
    <property type="molecule type" value="Genomic_DNA"/>
</dbReference>
<dbReference type="RefSeq" id="WP_000160904.1">
    <property type="nucleotide sequence ID" value="NC_003923.1"/>
</dbReference>
<dbReference type="SMR" id="Q8NWR4"/>
<dbReference type="CAZy" id="GT28">
    <property type="family name" value="Glycosyltransferase Family 28"/>
</dbReference>
<dbReference type="KEGG" id="sam:MW1307"/>
<dbReference type="HOGENOM" id="CLU_037404_0_0_9"/>
<dbReference type="UniPathway" id="UPA00219"/>
<dbReference type="GO" id="GO:0005886">
    <property type="term" value="C:plasma membrane"/>
    <property type="evidence" value="ECO:0007669"/>
    <property type="project" value="UniProtKB-SubCell"/>
</dbReference>
<dbReference type="GO" id="GO:0050511">
    <property type="term" value="F:undecaprenyldiphospho-muramoylpentapeptide beta-N-acetylglucosaminyltransferase activity"/>
    <property type="evidence" value="ECO:0007669"/>
    <property type="project" value="UniProtKB-UniRule"/>
</dbReference>
<dbReference type="GO" id="GO:0005975">
    <property type="term" value="P:carbohydrate metabolic process"/>
    <property type="evidence" value="ECO:0007669"/>
    <property type="project" value="InterPro"/>
</dbReference>
<dbReference type="GO" id="GO:0051301">
    <property type="term" value="P:cell division"/>
    <property type="evidence" value="ECO:0007669"/>
    <property type="project" value="UniProtKB-KW"/>
</dbReference>
<dbReference type="GO" id="GO:0071555">
    <property type="term" value="P:cell wall organization"/>
    <property type="evidence" value="ECO:0007669"/>
    <property type="project" value="UniProtKB-KW"/>
</dbReference>
<dbReference type="GO" id="GO:0030259">
    <property type="term" value="P:lipid glycosylation"/>
    <property type="evidence" value="ECO:0007669"/>
    <property type="project" value="UniProtKB-UniRule"/>
</dbReference>
<dbReference type="GO" id="GO:0009252">
    <property type="term" value="P:peptidoglycan biosynthetic process"/>
    <property type="evidence" value="ECO:0007669"/>
    <property type="project" value="UniProtKB-UniRule"/>
</dbReference>
<dbReference type="GO" id="GO:0008360">
    <property type="term" value="P:regulation of cell shape"/>
    <property type="evidence" value="ECO:0007669"/>
    <property type="project" value="UniProtKB-KW"/>
</dbReference>
<dbReference type="CDD" id="cd03785">
    <property type="entry name" value="GT28_MurG"/>
    <property type="match status" value="1"/>
</dbReference>
<dbReference type="Gene3D" id="3.40.50.2000">
    <property type="entry name" value="Glycogen Phosphorylase B"/>
    <property type="match status" value="2"/>
</dbReference>
<dbReference type="HAMAP" id="MF_00033">
    <property type="entry name" value="MurG"/>
    <property type="match status" value="1"/>
</dbReference>
<dbReference type="InterPro" id="IPR006009">
    <property type="entry name" value="GlcNAc_MurG"/>
</dbReference>
<dbReference type="InterPro" id="IPR007235">
    <property type="entry name" value="Glyco_trans_28_C"/>
</dbReference>
<dbReference type="InterPro" id="IPR004276">
    <property type="entry name" value="GlycoTrans_28_N"/>
</dbReference>
<dbReference type="NCBIfam" id="NF009102">
    <property type="entry name" value="PRK12446.1"/>
    <property type="match status" value="1"/>
</dbReference>
<dbReference type="PANTHER" id="PTHR21015:SF27">
    <property type="entry name" value="UDP-N-ACETYLGLUCOSAMINE--N-ACETYLMURAMYL-(PENTAPEPTIDE) PYROPHOSPHORYL-UNDECAPRENOL N-ACETYLGLUCOSAMINE TRANSFERASE"/>
    <property type="match status" value="1"/>
</dbReference>
<dbReference type="PANTHER" id="PTHR21015">
    <property type="entry name" value="UDP-N-ACETYLGLUCOSAMINE--N-ACETYLMURAMYL-(PENTAPEPTIDE) PYROPHOSPHORYL-UNDECAPRENOL N-ACETYLGLUCOSAMINE TRANSFERASE 1"/>
    <property type="match status" value="1"/>
</dbReference>
<dbReference type="Pfam" id="PF04101">
    <property type="entry name" value="Glyco_tran_28_C"/>
    <property type="match status" value="1"/>
</dbReference>
<dbReference type="Pfam" id="PF03033">
    <property type="entry name" value="Glyco_transf_28"/>
    <property type="match status" value="1"/>
</dbReference>
<dbReference type="SUPFAM" id="SSF53756">
    <property type="entry name" value="UDP-Glycosyltransferase/glycogen phosphorylase"/>
    <property type="match status" value="1"/>
</dbReference>
<protein>
    <recommendedName>
        <fullName evidence="1">UDP-N-acetylglucosamine--N-acetylmuramyl-(pentapeptide) pyrophosphoryl-undecaprenol N-acetylglucosamine transferase</fullName>
        <ecNumber evidence="1">2.4.1.227</ecNumber>
    </recommendedName>
    <alternativeName>
        <fullName evidence="1">Undecaprenyl-PP-MurNAc-pentapeptide-UDPGlcNAc GlcNAc transferase</fullName>
    </alternativeName>
</protein>
<organism>
    <name type="scientific">Staphylococcus aureus (strain MW2)</name>
    <dbReference type="NCBI Taxonomy" id="196620"/>
    <lineage>
        <taxon>Bacteria</taxon>
        <taxon>Bacillati</taxon>
        <taxon>Bacillota</taxon>
        <taxon>Bacilli</taxon>
        <taxon>Bacillales</taxon>
        <taxon>Staphylococcaceae</taxon>
        <taxon>Staphylococcus</taxon>
    </lineage>
</organism>
<feature type="chain" id="PRO_0000109215" description="UDP-N-acetylglucosamine--N-acetylmuramyl-(pentapeptide) pyrophosphoryl-undecaprenol N-acetylglucosamine transferase">
    <location>
        <begin position="1"/>
        <end position="356"/>
    </location>
</feature>
<feature type="binding site" evidence="1">
    <location>
        <position position="166"/>
    </location>
    <ligand>
        <name>UDP-N-acetyl-alpha-D-glucosamine</name>
        <dbReference type="ChEBI" id="CHEBI:57705"/>
    </ligand>
</feature>
<feature type="binding site" evidence="1">
    <location>
        <position position="196"/>
    </location>
    <ligand>
        <name>UDP-N-acetyl-alpha-D-glucosamine</name>
        <dbReference type="ChEBI" id="CHEBI:57705"/>
    </ligand>
</feature>
<feature type="binding site" evidence="1">
    <location>
        <position position="290"/>
    </location>
    <ligand>
        <name>UDP-N-acetyl-alpha-D-glucosamine</name>
        <dbReference type="ChEBI" id="CHEBI:57705"/>
    </ligand>
</feature>
<name>MURG_STAAW</name>
<evidence type="ECO:0000255" key="1">
    <source>
        <dbReference type="HAMAP-Rule" id="MF_00033"/>
    </source>
</evidence>
<reference key="1">
    <citation type="journal article" date="2002" name="Lancet">
        <title>Genome and virulence determinants of high virulence community-acquired MRSA.</title>
        <authorList>
            <person name="Baba T."/>
            <person name="Takeuchi F."/>
            <person name="Kuroda M."/>
            <person name="Yuzawa H."/>
            <person name="Aoki K."/>
            <person name="Oguchi A."/>
            <person name="Nagai Y."/>
            <person name="Iwama N."/>
            <person name="Asano K."/>
            <person name="Naimi T."/>
            <person name="Kuroda H."/>
            <person name="Cui L."/>
            <person name="Yamamoto K."/>
            <person name="Hiramatsu K."/>
        </authorList>
    </citation>
    <scope>NUCLEOTIDE SEQUENCE [LARGE SCALE GENOMIC DNA]</scope>
    <source>
        <strain>MW2</strain>
    </source>
</reference>
<gene>
    <name evidence="1" type="primary">murG</name>
    <name type="ordered locus">MW1307</name>
</gene>
<sequence>MTKIAFTGGGTVGHVSVNLSLIPTALSQGYEALYIGSKNGIEREMIESQLPEIKYYPISSGKLRRYISLENAKDVFKVLKGILDARKVLKKEKPDLLFSKGGFVSVPVVIAAKSLNIPTIIHESDLTPGLANKIALKFAKKIYTTFEETLNYLPKEKADFIGATIREDLKNGNAHNGYQLTGFNENKKVLLVMGGSLGSKKLNSIIRENLDALLQQYQVIHLTGKGLKDAQVKKSGYIQYEFVKEDLTDLLAITDTVISRAGSNAIYEFLTLRIPMLLVPLGLDQSRGDQIDNANHFADKGYAKAIDEEQLTAQILLQELNEMEQERTRIINNMKSYEQSYTKEALFDKMIKDALN</sequence>
<comment type="function">
    <text evidence="1">Cell wall formation. Catalyzes the transfer of a GlcNAc subunit on undecaprenyl-pyrophosphoryl-MurNAc-pentapeptide (lipid intermediate I) to form undecaprenyl-pyrophosphoryl-MurNAc-(pentapeptide)GlcNAc (lipid intermediate II).</text>
</comment>
<comment type="catalytic activity">
    <reaction evidence="1">
        <text>Mur2Ac(oyl-L-Ala-gamma-D-Glu-L-Lys-D-Ala-D-Ala)-di-trans,octa-cis-undecaprenyl diphosphate + UDP-N-acetyl-alpha-D-glucosamine = beta-D-GlcNAc-(1-&gt;4)-Mur2Ac(oyl-L-Ala-gamma-D-Glu-L-Lys-D-Ala-D-Ala)-di-trans,octa-cis-undecaprenyl diphosphate + UDP + H(+)</text>
        <dbReference type="Rhea" id="RHEA:23192"/>
        <dbReference type="ChEBI" id="CHEBI:15378"/>
        <dbReference type="ChEBI" id="CHEBI:57705"/>
        <dbReference type="ChEBI" id="CHEBI:58223"/>
        <dbReference type="ChEBI" id="CHEBI:60032"/>
        <dbReference type="ChEBI" id="CHEBI:60033"/>
        <dbReference type="EC" id="2.4.1.227"/>
    </reaction>
</comment>
<comment type="pathway">
    <text evidence="1">Cell wall biogenesis; peptidoglycan biosynthesis.</text>
</comment>
<comment type="subcellular location">
    <subcellularLocation>
        <location evidence="1">Cell membrane</location>
        <topology evidence="1">Peripheral membrane protein</topology>
        <orientation evidence="1">Cytoplasmic side</orientation>
    </subcellularLocation>
</comment>
<comment type="similarity">
    <text evidence="1">Belongs to the glycosyltransferase 28 family. MurG subfamily.</text>
</comment>
<keyword id="KW-0131">Cell cycle</keyword>
<keyword id="KW-0132">Cell division</keyword>
<keyword id="KW-1003">Cell membrane</keyword>
<keyword id="KW-0133">Cell shape</keyword>
<keyword id="KW-0961">Cell wall biogenesis/degradation</keyword>
<keyword id="KW-0328">Glycosyltransferase</keyword>
<keyword id="KW-0472">Membrane</keyword>
<keyword id="KW-0573">Peptidoglycan synthesis</keyword>
<keyword id="KW-0808">Transferase</keyword>
<proteinExistence type="inferred from homology"/>